<reference key="1">
    <citation type="journal article" date="1997" name="Microbiology">
        <title>Sequencing and functional annotation of the Bacillus subtilis genes in the 200 kb rrnB-dnaB region.</title>
        <authorList>
            <person name="Lapidus A."/>
            <person name="Galleron N."/>
            <person name="Sorokin A."/>
            <person name="Ehrlich S.D."/>
        </authorList>
    </citation>
    <scope>NUCLEOTIDE SEQUENCE [GENOMIC DNA]</scope>
    <source>
        <strain>168</strain>
    </source>
</reference>
<reference key="2">
    <citation type="journal article" date="1997" name="Nature">
        <title>The complete genome sequence of the Gram-positive bacterium Bacillus subtilis.</title>
        <authorList>
            <person name="Kunst F."/>
            <person name="Ogasawara N."/>
            <person name="Moszer I."/>
            <person name="Albertini A.M."/>
            <person name="Alloni G."/>
            <person name="Azevedo V."/>
            <person name="Bertero M.G."/>
            <person name="Bessieres P."/>
            <person name="Bolotin A."/>
            <person name="Borchert S."/>
            <person name="Borriss R."/>
            <person name="Boursier L."/>
            <person name="Brans A."/>
            <person name="Braun M."/>
            <person name="Brignell S.C."/>
            <person name="Bron S."/>
            <person name="Brouillet S."/>
            <person name="Bruschi C.V."/>
            <person name="Caldwell B."/>
            <person name="Capuano V."/>
            <person name="Carter N.M."/>
            <person name="Choi S.-K."/>
            <person name="Codani J.-J."/>
            <person name="Connerton I.F."/>
            <person name="Cummings N.J."/>
            <person name="Daniel R.A."/>
            <person name="Denizot F."/>
            <person name="Devine K.M."/>
            <person name="Duesterhoeft A."/>
            <person name="Ehrlich S.D."/>
            <person name="Emmerson P.T."/>
            <person name="Entian K.-D."/>
            <person name="Errington J."/>
            <person name="Fabret C."/>
            <person name="Ferrari E."/>
            <person name="Foulger D."/>
            <person name="Fritz C."/>
            <person name="Fujita M."/>
            <person name="Fujita Y."/>
            <person name="Fuma S."/>
            <person name="Galizzi A."/>
            <person name="Galleron N."/>
            <person name="Ghim S.-Y."/>
            <person name="Glaser P."/>
            <person name="Goffeau A."/>
            <person name="Golightly E.J."/>
            <person name="Grandi G."/>
            <person name="Guiseppi G."/>
            <person name="Guy B.J."/>
            <person name="Haga K."/>
            <person name="Haiech J."/>
            <person name="Harwood C.R."/>
            <person name="Henaut A."/>
            <person name="Hilbert H."/>
            <person name="Holsappel S."/>
            <person name="Hosono S."/>
            <person name="Hullo M.-F."/>
            <person name="Itaya M."/>
            <person name="Jones L.-M."/>
            <person name="Joris B."/>
            <person name="Karamata D."/>
            <person name="Kasahara Y."/>
            <person name="Klaerr-Blanchard M."/>
            <person name="Klein C."/>
            <person name="Kobayashi Y."/>
            <person name="Koetter P."/>
            <person name="Koningstein G."/>
            <person name="Krogh S."/>
            <person name="Kumano M."/>
            <person name="Kurita K."/>
            <person name="Lapidus A."/>
            <person name="Lardinois S."/>
            <person name="Lauber J."/>
            <person name="Lazarevic V."/>
            <person name="Lee S.-M."/>
            <person name="Levine A."/>
            <person name="Liu H."/>
            <person name="Masuda S."/>
            <person name="Mauel C."/>
            <person name="Medigue C."/>
            <person name="Medina N."/>
            <person name="Mellado R.P."/>
            <person name="Mizuno M."/>
            <person name="Moestl D."/>
            <person name="Nakai S."/>
            <person name="Noback M."/>
            <person name="Noone D."/>
            <person name="O'Reilly M."/>
            <person name="Ogawa K."/>
            <person name="Ogiwara A."/>
            <person name="Oudega B."/>
            <person name="Park S.-H."/>
            <person name="Parro V."/>
            <person name="Pohl T.M."/>
            <person name="Portetelle D."/>
            <person name="Porwollik S."/>
            <person name="Prescott A.M."/>
            <person name="Presecan E."/>
            <person name="Pujic P."/>
            <person name="Purnelle B."/>
            <person name="Rapoport G."/>
            <person name="Rey M."/>
            <person name="Reynolds S."/>
            <person name="Rieger M."/>
            <person name="Rivolta C."/>
            <person name="Rocha E."/>
            <person name="Roche B."/>
            <person name="Rose M."/>
            <person name="Sadaie Y."/>
            <person name="Sato T."/>
            <person name="Scanlan E."/>
            <person name="Schleich S."/>
            <person name="Schroeter R."/>
            <person name="Scoffone F."/>
            <person name="Sekiguchi J."/>
            <person name="Sekowska A."/>
            <person name="Seror S.J."/>
            <person name="Serror P."/>
            <person name="Shin B.-S."/>
            <person name="Soldo B."/>
            <person name="Sorokin A."/>
            <person name="Tacconi E."/>
            <person name="Takagi T."/>
            <person name="Takahashi H."/>
            <person name="Takemaru K."/>
            <person name="Takeuchi M."/>
            <person name="Tamakoshi A."/>
            <person name="Tanaka T."/>
            <person name="Terpstra P."/>
            <person name="Tognoni A."/>
            <person name="Tosato V."/>
            <person name="Uchiyama S."/>
            <person name="Vandenbol M."/>
            <person name="Vannier F."/>
            <person name="Vassarotti A."/>
            <person name="Viari A."/>
            <person name="Wambutt R."/>
            <person name="Wedler E."/>
            <person name="Wedler H."/>
            <person name="Weitzenegger T."/>
            <person name="Winters P."/>
            <person name="Wipat A."/>
            <person name="Yamamoto H."/>
            <person name="Yamane K."/>
            <person name="Yasumoto K."/>
            <person name="Yata K."/>
            <person name="Yoshida K."/>
            <person name="Yoshikawa H.-F."/>
            <person name="Zumstein E."/>
            <person name="Yoshikawa H."/>
            <person name="Danchin A."/>
        </authorList>
    </citation>
    <scope>NUCLEOTIDE SEQUENCE [LARGE SCALE GENOMIC DNA]</scope>
    <source>
        <strain>168</strain>
    </source>
</reference>
<reference key="3">
    <citation type="journal article" date="2000" name="J. Bacteriol.">
        <title>An operon for a putative ATP-binding cassette transport system involved in acetoin utilization of Bacillus subtilis.</title>
        <authorList>
            <person name="Yoshida K."/>
            <person name="Fujita Y."/>
            <person name="Ehrlich S.D."/>
        </authorList>
    </citation>
    <scope>FUNCTION</scope>
    <scope>DEVELOPMENTAL STAGE</scope>
    <scope>INDUCTION</scope>
</reference>
<name>YTRB_BACSU</name>
<sequence>MIELRQLSKAIDGNQVLKDVSLTIEKGEIFGLLGRNGSGKTTMLRLIQQIIFADSGTILFDGVEIKKHPKVKQNIIYMPVQNPFYDKYTYKQLVDILRRIYPKFDVTYANELMNRYEIPETKKYRELSTGLKKQLSLVLSFAARPALILLDEPTDGIDAVTRHDVLQLMVDEVAERDTSILITSHRLEDIERMCNRIGFLEDNSLTNVMDLDELKEEYIKIQMAFDTDVNLAIREQNIPMLDQAGVFYTVLIPKSDEEKKSFLRELKPKVWNELPVNLEEVFIAKFGGKRRW</sequence>
<comment type="function">
    <text evidence="2">Part of the ABC transporter complex YtrBCDEF that plays a role in acetoin utilization during stationary phase and sporulation.</text>
</comment>
<comment type="subunit">
    <text evidence="3">The complex is composed of 2 ATP-binding proteins (YtrB and YtrE), 2 transmembrane proteins (YtrC and YtrD) and a solute-binding protein (YtrF).</text>
</comment>
<comment type="subcellular location">
    <subcellularLocation>
        <location evidence="3">Cell membrane</location>
        <topology evidence="3">Peripheral membrane protein</topology>
        <orientation evidence="3">Cytoplasmic side</orientation>
    </subcellularLocation>
</comment>
<comment type="developmental stage">
    <text evidence="2">Expressed early in the stationary phase.</text>
</comment>
<comment type="induction">
    <text evidence="2">Negatively regulated by YtrA.</text>
</comment>
<comment type="similarity">
    <text evidence="3">Belongs to the ABC transporter superfamily.</text>
</comment>
<protein>
    <recommendedName>
        <fullName>ABC transporter ATP-binding protein YtrB</fullName>
    </recommendedName>
</protein>
<dbReference type="EMBL" id="AF008220">
    <property type="protein sequence ID" value="AAC00248.1"/>
    <property type="molecule type" value="Genomic_DNA"/>
</dbReference>
<dbReference type="EMBL" id="AL009126">
    <property type="protein sequence ID" value="CAB15023.1"/>
    <property type="molecule type" value="Genomic_DNA"/>
</dbReference>
<dbReference type="PIR" id="H69999">
    <property type="entry name" value="H69999"/>
</dbReference>
<dbReference type="RefSeq" id="NP_390923.1">
    <property type="nucleotide sequence ID" value="NC_000964.3"/>
</dbReference>
<dbReference type="RefSeq" id="WP_004398506.1">
    <property type="nucleotide sequence ID" value="NZ_OZ025638.1"/>
</dbReference>
<dbReference type="SMR" id="O34641"/>
<dbReference type="FunCoup" id="O34641">
    <property type="interactions" value="222"/>
</dbReference>
<dbReference type="STRING" id="224308.BSU30450"/>
<dbReference type="TCDB" id="3.A.1.153.1">
    <property type="family name" value="the atp-binding cassette (abc) superfamily"/>
</dbReference>
<dbReference type="PaxDb" id="224308-BSU30450"/>
<dbReference type="EnsemblBacteria" id="CAB15023">
    <property type="protein sequence ID" value="CAB15023"/>
    <property type="gene ID" value="BSU_30450"/>
</dbReference>
<dbReference type="GeneID" id="936641"/>
<dbReference type="KEGG" id="bsu:BSU30450"/>
<dbReference type="PATRIC" id="fig|224308.179.peg.3302"/>
<dbReference type="eggNOG" id="COG1131">
    <property type="taxonomic scope" value="Bacteria"/>
</dbReference>
<dbReference type="InParanoid" id="O34641"/>
<dbReference type="OrthoDB" id="9804819at2"/>
<dbReference type="PhylomeDB" id="O34641"/>
<dbReference type="BioCyc" id="BSUB:BSU30450-MONOMER"/>
<dbReference type="Proteomes" id="UP000001570">
    <property type="component" value="Chromosome"/>
</dbReference>
<dbReference type="GO" id="GO:0005886">
    <property type="term" value="C:plasma membrane"/>
    <property type="evidence" value="ECO:0007669"/>
    <property type="project" value="UniProtKB-SubCell"/>
</dbReference>
<dbReference type="GO" id="GO:0005524">
    <property type="term" value="F:ATP binding"/>
    <property type="evidence" value="ECO:0007669"/>
    <property type="project" value="UniProtKB-KW"/>
</dbReference>
<dbReference type="GO" id="GO:0016887">
    <property type="term" value="F:ATP hydrolysis activity"/>
    <property type="evidence" value="ECO:0007669"/>
    <property type="project" value="InterPro"/>
</dbReference>
<dbReference type="CDD" id="cd03230">
    <property type="entry name" value="ABC_DR_subfamily_A"/>
    <property type="match status" value="1"/>
</dbReference>
<dbReference type="Gene3D" id="3.40.50.300">
    <property type="entry name" value="P-loop containing nucleotide triphosphate hydrolases"/>
    <property type="match status" value="1"/>
</dbReference>
<dbReference type="InterPro" id="IPR003593">
    <property type="entry name" value="AAA+_ATPase"/>
</dbReference>
<dbReference type="InterPro" id="IPR003439">
    <property type="entry name" value="ABC_transporter-like_ATP-bd"/>
</dbReference>
<dbReference type="InterPro" id="IPR027417">
    <property type="entry name" value="P-loop_NTPase"/>
</dbReference>
<dbReference type="PANTHER" id="PTHR43158:SF10">
    <property type="entry name" value="ABC TRANSPORTER ATP-BINDING PROTEIN YTRB"/>
    <property type="match status" value="1"/>
</dbReference>
<dbReference type="PANTHER" id="PTHR43158">
    <property type="entry name" value="SKFA PEPTIDE EXPORT ATP-BINDING PROTEIN SKFE"/>
    <property type="match status" value="1"/>
</dbReference>
<dbReference type="Pfam" id="PF00005">
    <property type="entry name" value="ABC_tran"/>
    <property type="match status" value="1"/>
</dbReference>
<dbReference type="SMART" id="SM00382">
    <property type="entry name" value="AAA"/>
    <property type="match status" value="1"/>
</dbReference>
<dbReference type="SUPFAM" id="SSF52540">
    <property type="entry name" value="P-loop containing nucleoside triphosphate hydrolases"/>
    <property type="match status" value="1"/>
</dbReference>
<dbReference type="PROSITE" id="PS50893">
    <property type="entry name" value="ABC_TRANSPORTER_2"/>
    <property type="match status" value="1"/>
</dbReference>
<evidence type="ECO:0000255" key="1">
    <source>
        <dbReference type="PROSITE-ProRule" id="PRU00434"/>
    </source>
</evidence>
<evidence type="ECO:0000269" key="2">
    <source>
    </source>
</evidence>
<evidence type="ECO:0000305" key="3"/>
<keyword id="KW-0067">ATP-binding</keyword>
<keyword id="KW-1003">Cell membrane</keyword>
<keyword id="KW-0472">Membrane</keyword>
<keyword id="KW-0547">Nucleotide-binding</keyword>
<keyword id="KW-1185">Reference proteome</keyword>
<keyword id="KW-0813">Transport</keyword>
<feature type="chain" id="PRO_0000360813" description="ABC transporter ATP-binding protein YtrB">
    <location>
        <begin position="1"/>
        <end position="292"/>
    </location>
</feature>
<feature type="domain" description="ABC transporter" evidence="1">
    <location>
        <begin position="2"/>
        <end position="227"/>
    </location>
</feature>
<feature type="binding site" evidence="1">
    <location>
        <begin position="34"/>
        <end position="41"/>
    </location>
    <ligand>
        <name>ATP</name>
        <dbReference type="ChEBI" id="CHEBI:30616"/>
    </ligand>
</feature>
<accession>O34641</accession>
<accession>Q795Q1</accession>
<organism>
    <name type="scientific">Bacillus subtilis (strain 168)</name>
    <dbReference type="NCBI Taxonomy" id="224308"/>
    <lineage>
        <taxon>Bacteria</taxon>
        <taxon>Bacillati</taxon>
        <taxon>Bacillota</taxon>
        <taxon>Bacilli</taxon>
        <taxon>Bacillales</taxon>
        <taxon>Bacillaceae</taxon>
        <taxon>Bacillus</taxon>
    </lineage>
</organism>
<gene>
    <name type="primary">ytrB</name>
    <name type="ordered locus">BSU30450</name>
</gene>
<proteinExistence type="evidence at transcript level"/>